<accession>Q7M7K0</accession>
<reference key="1">
    <citation type="journal article" date="2003" name="Genome Res.">
        <title>Comparative genome analysis of Vibrio vulnificus, a marine pathogen.</title>
        <authorList>
            <person name="Chen C.-Y."/>
            <person name="Wu K.-M."/>
            <person name="Chang Y.-C."/>
            <person name="Chang C.-H."/>
            <person name="Tsai H.-C."/>
            <person name="Liao T.-L."/>
            <person name="Liu Y.-M."/>
            <person name="Chen H.-J."/>
            <person name="Shen A.B.-T."/>
            <person name="Li J.-C."/>
            <person name="Su T.-L."/>
            <person name="Shao C.-P."/>
            <person name="Lee C.-T."/>
            <person name="Hor L.-I."/>
            <person name="Tsai S.-F."/>
        </authorList>
    </citation>
    <scope>NUCLEOTIDE SEQUENCE [LARGE SCALE GENOMIC DNA]</scope>
    <source>
        <strain>YJ016</strain>
    </source>
</reference>
<proteinExistence type="inferred from homology"/>
<organism>
    <name type="scientific">Vibrio vulnificus (strain YJ016)</name>
    <dbReference type="NCBI Taxonomy" id="196600"/>
    <lineage>
        <taxon>Bacteria</taxon>
        <taxon>Pseudomonadati</taxon>
        <taxon>Pseudomonadota</taxon>
        <taxon>Gammaproteobacteria</taxon>
        <taxon>Vibrionales</taxon>
        <taxon>Vibrionaceae</taxon>
        <taxon>Vibrio</taxon>
    </lineage>
</organism>
<feature type="chain" id="PRO_0000205326" description="Deoxyguanosinetriphosphate triphosphohydrolase-like protein">
    <location>
        <begin position="1"/>
        <end position="443"/>
    </location>
</feature>
<feature type="domain" description="HD" evidence="2">
    <location>
        <begin position="66"/>
        <end position="259"/>
    </location>
</feature>
<sequence>MESTLSLTIRSQWLERHDDEHKIRRDDHRSPFQRDRARILHSAAFRRLQAKTQVHGNSLEDFHRTRLTHSLEAAQLGTGIVAQIKKKQPEYRDLLPTDSLIDALCLAHDIGHPPYGHGGEVALNYMMRDHGGFEGNAQTFRIVTQLEPYTEHFGMNLSRRTLLGLIKYPAFISQTRAASQPAPVSHQRQIKAKQWSPAKGIYDCDKALFDWVLAPLSETDKQQLNAMRDCPHDALSHRKTRYKSLDCSIMELADDIAYGVHDLEDAIVLGLVTRSQWQEGAASQLADCGDPWFEKHISSIGEMLFSGQHHQRKDAIGGMVNALLTSIDVKPVDGEFESPLLAFNAYLDIGMEKALSILKHFVSQYVIQIPQVQIVEYKGQQIIMDLFEALSADPQRLLPLPTRHRWELAETDTSKMRVIADYISSMTDGHAQRLHQQLFSSHH</sequence>
<evidence type="ECO:0000255" key="1">
    <source>
        <dbReference type="HAMAP-Rule" id="MF_01212"/>
    </source>
</evidence>
<evidence type="ECO:0000255" key="2">
    <source>
        <dbReference type="PROSITE-ProRule" id="PRU01175"/>
    </source>
</evidence>
<gene>
    <name type="ordered locus">VV1112</name>
</gene>
<dbReference type="EMBL" id="BA000037">
    <property type="protein sequence ID" value="BAC93876.1"/>
    <property type="molecule type" value="Genomic_DNA"/>
</dbReference>
<dbReference type="RefSeq" id="WP_011078141.1">
    <property type="nucleotide sequence ID" value="NC_005139.1"/>
</dbReference>
<dbReference type="SMR" id="Q7M7K0"/>
<dbReference type="STRING" id="672.VV93_v1c10330"/>
<dbReference type="KEGG" id="vvy:VV1112"/>
<dbReference type="PATRIC" id="fig|196600.6.peg.1108"/>
<dbReference type="eggNOG" id="COG0232">
    <property type="taxonomic scope" value="Bacteria"/>
</dbReference>
<dbReference type="HOGENOM" id="CLU_028163_0_0_6"/>
<dbReference type="Proteomes" id="UP000002675">
    <property type="component" value="Chromosome I"/>
</dbReference>
<dbReference type="GO" id="GO:0008832">
    <property type="term" value="F:dGTPase activity"/>
    <property type="evidence" value="ECO:0007669"/>
    <property type="project" value="TreeGrafter"/>
</dbReference>
<dbReference type="GO" id="GO:0006203">
    <property type="term" value="P:dGTP catabolic process"/>
    <property type="evidence" value="ECO:0007669"/>
    <property type="project" value="TreeGrafter"/>
</dbReference>
<dbReference type="CDD" id="cd00077">
    <property type="entry name" value="HDc"/>
    <property type="match status" value="1"/>
</dbReference>
<dbReference type="Gene3D" id="1.10.3210.10">
    <property type="entry name" value="Hypothetical protein af1432"/>
    <property type="match status" value="1"/>
</dbReference>
<dbReference type="HAMAP" id="MF_01212">
    <property type="entry name" value="dGTPase_type2"/>
    <property type="match status" value="1"/>
</dbReference>
<dbReference type="InterPro" id="IPR006261">
    <property type="entry name" value="dGTPase"/>
</dbReference>
<dbReference type="InterPro" id="IPR050135">
    <property type="entry name" value="dGTPase-like"/>
</dbReference>
<dbReference type="InterPro" id="IPR023023">
    <property type="entry name" value="dNTPase_2"/>
</dbReference>
<dbReference type="InterPro" id="IPR003607">
    <property type="entry name" value="HD/PDEase_dom"/>
</dbReference>
<dbReference type="InterPro" id="IPR006674">
    <property type="entry name" value="HD_domain"/>
</dbReference>
<dbReference type="InterPro" id="IPR026875">
    <property type="entry name" value="PHydrolase_assoc_dom"/>
</dbReference>
<dbReference type="NCBIfam" id="NF041026">
    <property type="entry name" value="antiphage_dGTPase"/>
    <property type="match status" value="1"/>
</dbReference>
<dbReference type="NCBIfam" id="TIGR01353">
    <property type="entry name" value="dGTP_triPase"/>
    <property type="match status" value="1"/>
</dbReference>
<dbReference type="NCBIfam" id="NF003701">
    <property type="entry name" value="PRK05318.1"/>
    <property type="match status" value="1"/>
</dbReference>
<dbReference type="PANTHER" id="PTHR11373:SF40">
    <property type="entry name" value="DEOXYGUANOSINETRIPHOSPHATE TRIPHOSPHOHYDROLASE-LIKE PROTEIN 2"/>
    <property type="match status" value="1"/>
</dbReference>
<dbReference type="PANTHER" id="PTHR11373">
    <property type="entry name" value="DEOXYNUCLEOSIDE TRIPHOSPHATE TRIPHOSPHOHYDROLASE"/>
    <property type="match status" value="1"/>
</dbReference>
<dbReference type="Pfam" id="PF01966">
    <property type="entry name" value="HD"/>
    <property type="match status" value="1"/>
</dbReference>
<dbReference type="Pfam" id="PF13286">
    <property type="entry name" value="HD_assoc"/>
    <property type="match status" value="1"/>
</dbReference>
<dbReference type="SMART" id="SM00471">
    <property type="entry name" value="HDc"/>
    <property type="match status" value="1"/>
</dbReference>
<dbReference type="SUPFAM" id="SSF109604">
    <property type="entry name" value="HD-domain/PDEase-like"/>
    <property type="match status" value="1"/>
</dbReference>
<dbReference type="PROSITE" id="PS51831">
    <property type="entry name" value="HD"/>
    <property type="match status" value="1"/>
</dbReference>
<comment type="similarity">
    <text evidence="1">Belongs to the dGTPase family. Type 2 subfamily.</text>
</comment>
<protein>
    <recommendedName>
        <fullName evidence="1">Deoxyguanosinetriphosphate triphosphohydrolase-like protein</fullName>
    </recommendedName>
</protein>
<keyword id="KW-0378">Hydrolase</keyword>
<name>DGTL1_VIBVY</name>